<evidence type="ECO:0000250" key="1">
    <source>
        <dbReference type="UniProtKB" id="O07855"/>
    </source>
</evidence>
<evidence type="ECO:0000255" key="2"/>
<evidence type="ECO:0000269" key="3">
    <source>
    </source>
</evidence>
<evidence type="ECO:0000303" key="4">
    <source>
    </source>
</evidence>
<evidence type="ECO:0000305" key="5"/>
<accession>Q2FV60</accession>
<organism>
    <name type="scientific">Staphylococcus aureus (strain NCTC 8325 / PS 47)</name>
    <dbReference type="NCBI Taxonomy" id="93061"/>
    <lineage>
        <taxon>Bacteria</taxon>
        <taxon>Bacillati</taxon>
        <taxon>Bacillota</taxon>
        <taxon>Bacilli</taxon>
        <taxon>Bacillales</taxon>
        <taxon>Staphylococcaceae</taxon>
        <taxon>Staphylococcus</taxon>
    </lineage>
</organism>
<protein>
    <recommendedName>
        <fullName evidence="4">4,4'-diapophytoene desaturase (4,4'-diaponeurosporene-forming)</fullName>
        <ecNumber evidence="1">1.3.8.-</ecNumber>
    </recommendedName>
    <alternativeName>
        <fullName evidence="1">Dehydrosqualene desaturase</fullName>
    </alternativeName>
</protein>
<proteinExistence type="inferred from homology"/>
<name>CRTN_STAA8</name>
<reference key="1">
    <citation type="book" date="2006" name="Gram positive pathogens, 2nd edition">
        <title>The Staphylococcus aureus NCTC 8325 genome.</title>
        <editorList>
            <person name="Fischetti V."/>
            <person name="Novick R."/>
            <person name="Ferretti J."/>
            <person name="Portnoy D."/>
            <person name="Rood J."/>
        </editorList>
        <authorList>
            <person name="Gillaspy A.F."/>
            <person name="Worrell V."/>
            <person name="Orvis J."/>
            <person name="Roe B.A."/>
            <person name="Dyer D.W."/>
            <person name="Iandolo J.J."/>
        </authorList>
    </citation>
    <scope>NUCLEOTIDE SEQUENCE [LARGE SCALE GENOMIC DNA]</scope>
    <source>
        <strain>NCTC 8325 / PS 47</strain>
    </source>
</reference>
<reference key="2">
    <citation type="journal article" date="2012" name="J. Biol. Chem.">
        <title>Functional expression and extension of staphylococcal staphyloxanthin biosynthetic pathway in Escherichia coli.</title>
        <authorList>
            <person name="Kim S.H."/>
            <person name="Lee P.C."/>
        </authorList>
    </citation>
    <scope>FUNCTION</scope>
    <scope>PATHWAY</scope>
    <source>
        <strain>KCTC 1928</strain>
    </source>
</reference>
<dbReference type="EC" id="1.3.8.-" evidence="1"/>
<dbReference type="EMBL" id="CP000253">
    <property type="protein sequence ID" value="ABD31875.1"/>
    <property type="molecule type" value="Genomic_DNA"/>
</dbReference>
<dbReference type="RefSeq" id="WP_000686168.1">
    <property type="nucleotide sequence ID" value="NZ_LS483365.1"/>
</dbReference>
<dbReference type="RefSeq" id="YP_501332.1">
    <property type="nucleotide sequence ID" value="NC_007795.1"/>
</dbReference>
<dbReference type="SMR" id="Q2FV60"/>
<dbReference type="STRING" id="93061.SAOUHSC_02877"/>
<dbReference type="PaxDb" id="1280-SAXN108_2812"/>
<dbReference type="GeneID" id="3921548"/>
<dbReference type="KEGG" id="sao:SAOUHSC_02877"/>
<dbReference type="PATRIC" id="fig|93061.5.peg.2601"/>
<dbReference type="eggNOG" id="COG1233">
    <property type="taxonomic scope" value="Bacteria"/>
</dbReference>
<dbReference type="HOGENOM" id="CLU_019722_2_1_9"/>
<dbReference type="OrthoDB" id="9814556at2"/>
<dbReference type="UniPathway" id="UPA00029">
    <property type="reaction ID" value="UER00557"/>
</dbReference>
<dbReference type="PRO" id="PR:Q2FV60"/>
<dbReference type="Proteomes" id="UP000008816">
    <property type="component" value="Chromosome"/>
</dbReference>
<dbReference type="GO" id="GO:0102223">
    <property type="term" value="F:4,4'-diapophytoene desaturase (4,4'-diaponeurosporene-forming)"/>
    <property type="evidence" value="ECO:0007669"/>
    <property type="project" value="RHEA"/>
</dbReference>
<dbReference type="GO" id="GO:0016117">
    <property type="term" value="P:carotenoid biosynthetic process"/>
    <property type="evidence" value="ECO:0007669"/>
    <property type="project" value="UniProtKB-KW"/>
</dbReference>
<dbReference type="Gene3D" id="3.50.50.60">
    <property type="entry name" value="FAD/NAD(P)-binding domain"/>
    <property type="match status" value="2"/>
</dbReference>
<dbReference type="InterPro" id="IPR002937">
    <property type="entry name" value="Amino_oxidase"/>
</dbReference>
<dbReference type="InterPro" id="IPR014105">
    <property type="entry name" value="Carotenoid/retinoid_OxRdtase"/>
</dbReference>
<dbReference type="InterPro" id="IPR036188">
    <property type="entry name" value="FAD/NAD-bd_sf"/>
</dbReference>
<dbReference type="NCBIfam" id="TIGR02734">
    <property type="entry name" value="crtI_fam"/>
    <property type="match status" value="1"/>
</dbReference>
<dbReference type="PANTHER" id="PTHR43734">
    <property type="entry name" value="PHYTOENE DESATURASE"/>
    <property type="match status" value="1"/>
</dbReference>
<dbReference type="PANTHER" id="PTHR43734:SF1">
    <property type="entry name" value="PHYTOENE DESATURASE"/>
    <property type="match status" value="1"/>
</dbReference>
<dbReference type="Pfam" id="PF01593">
    <property type="entry name" value="Amino_oxidase"/>
    <property type="match status" value="1"/>
</dbReference>
<dbReference type="PRINTS" id="PR00419">
    <property type="entry name" value="ADXRDTASE"/>
</dbReference>
<dbReference type="SUPFAM" id="SSF51905">
    <property type="entry name" value="FAD/NAD(P)-binding domain"/>
    <property type="match status" value="1"/>
</dbReference>
<gene>
    <name evidence="1" type="primary">crtN</name>
    <name type="ordered locus">SAOUHSC_02877</name>
</gene>
<comment type="function">
    <text evidence="3">Involved in the biosynthesis of the yellow-orange carotenoid staphyloxanthin, which plays a role in the virulence via its protective function against oxidative stress. Catalyzes three successive dehydrogenation reactions that lead to the introduction of three double bonds into 4,4'-diapophytoene (dehydrosqualene), with 4,4'-diapophytofluene and 4,4'-diapo-zeta-carotene as intermediates, and 4,4'-diaponeurosporene (the major deep-yellow pigment in staphylococci strains) as the end product.</text>
</comment>
<comment type="catalytic activity">
    <reaction evidence="1">
        <text>15-cis-4,4'-diapophytoene + 3 FAD + 3 H(+) = all-trans-4,4'-diaponeurosporene + 3 FADH2</text>
        <dbReference type="Rhea" id="RHEA:42800"/>
        <dbReference type="ChEBI" id="CHEBI:15378"/>
        <dbReference type="ChEBI" id="CHEBI:57692"/>
        <dbReference type="ChEBI" id="CHEBI:58307"/>
        <dbReference type="ChEBI" id="CHEBI:62738"/>
        <dbReference type="ChEBI" id="CHEBI:62743"/>
    </reaction>
</comment>
<comment type="pathway">
    <text evidence="3">Carotenoid biosynthesis; staphyloxanthin biosynthesis; staphyloxanthin from farnesyl diphosphate: step 2/5.</text>
</comment>
<comment type="similarity">
    <text evidence="5">Belongs to the carotenoid/retinoid oxidoreductase family. CrtN subfamily.</text>
</comment>
<feature type="chain" id="PRO_0000272191" description="4,4'-diapophytoene desaturase (4,4'-diaponeurosporene-forming)">
    <location>
        <begin position="1"/>
        <end position="502"/>
    </location>
</feature>
<feature type="binding site" evidence="2">
    <location>
        <begin position="5"/>
        <end position="17"/>
    </location>
    <ligand>
        <name>FAD</name>
        <dbReference type="ChEBI" id="CHEBI:57692"/>
    </ligand>
</feature>
<keyword id="KW-0125">Carotenoid biosynthesis</keyword>
<keyword id="KW-0274">FAD</keyword>
<keyword id="KW-0285">Flavoprotein</keyword>
<keyword id="KW-0560">Oxidoreductase</keyword>
<keyword id="KW-1185">Reference proteome</keyword>
<keyword id="KW-0843">Virulence</keyword>
<sequence length="502" mass="56742">MKIAVIGAGVTGLAAAARIASQGHEVTIFEKNNNVGGRMNQLKKDGFTFDMGPTIVMMPDVYKDVFTACGKNYEDYIELRQLRYIYDVYFDHDDRITVPTDLAELQQMLESIEPGSTHGFMSFLTDVYKKYEIARRYFLERTYRKPSDFYNMTSLVQGAKLKTLNHADQLIEHYIDNEKIQKLLAFQTLYIGIDPKRGPSLYSIIPMIEMMFGVHFIKGGMYGMAQGLAQLNKDLGVNIELNAEIEQIIIDPKFKRADAIKVNGDIRKFDKILCTADFPSVAESLMPDFAPIKKYPPHKIADLDYSCSAFLMYIGIDIDVTDQVRLHNVIFSDDFRGNIEEIFEGRLSYDPSIYVYVPAVADKSLAPEGKTGIYVLMPTPELKTGSGIDWSDEALTQQIKEIIYRKLATIEVFEDIKSHIVSETIFTPNDFEQTYHAKFGSAFGLMPTLAQSNYYRPQNVSRDYKDLYFAGASTHPGAGVPIVLTSAKITVDEMIKDIERGV</sequence>